<evidence type="ECO:0000250" key="1">
    <source>
        <dbReference type="UniProtKB" id="O22317"/>
    </source>
</evidence>
<evidence type="ECO:0000269" key="2">
    <source>
    </source>
</evidence>
<evidence type="ECO:0000269" key="3">
    <source>
    </source>
</evidence>
<evidence type="ECO:0000269" key="4">
    <source>
    </source>
</evidence>
<evidence type="ECO:0000269" key="5">
    <source ref="4"/>
</evidence>
<evidence type="ECO:0000305" key="6"/>
<evidence type="ECO:0007829" key="7">
    <source>
        <dbReference type="PDB" id="1GHS"/>
    </source>
</evidence>
<keyword id="KW-0002">3D-structure</keyword>
<keyword id="KW-0903">Direct protein sequencing</keyword>
<keyword id="KW-0326">Glycosidase</keyword>
<keyword id="KW-0378">Hydrolase</keyword>
<keyword id="KW-0611">Plant defense</keyword>
<keyword id="KW-0732">Signal</keyword>
<feature type="signal peptide" evidence="3 5">
    <location>
        <begin position="1"/>
        <end position="28"/>
    </location>
</feature>
<feature type="chain" id="PRO_0000011848" description="Glucan endo-1,3-beta-glucosidase GII">
    <location>
        <begin position="29"/>
        <end position="334"/>
    </location>
</feature>
<feature type="active site" description="Proton donor" evidence="1">
    <location>
        <position position="122"/>
    </location>
</feature>
<feature type="active site" description="Nucleophile" evidence="1">
    <location>
        <position position="259"/>
    </location>
</feature>
<feature type="sequence conflict" description="In Ref. 2; AAA32939." evidence="6" ref="2">
    <original>A</original>
    <variation>V</variation>
    <location>
        <position position="12"/>
    </location>
</feature>
<feature type="sequence conflict" description="In Ref. 2; AAA32939." evidence="6" ref="2">
    <original>L</original>
    <variation>V</variation>
    <location>
        <position position="71"/>
    </location>
</feature>
<feature type="strand" evidence="7">
    <location>
        <begin position="30"/>
        <end position="32"/>
    </location>
</feature>
<feature type="strand" evidence="7">
    <location>
        <begin position="37"/>
        <end position="39"/>
    </location>
</feature>
<feature type="helix" evidence="7">
    <location>
        <begin position="43"/>
        <end position="53"/>
    </location>
</feature>
<feature type="strand" evidence="7">
    <location>
        <begin position="57"/>
        <end position="62"/>
    </location>
</feature>
<feature type="helix" evidence="7">
    <location>
        <begin position="65"/>
        <end position="70"/>
    </location>
</feature>
<feature type="turn" evidence="7">
    <location>
        <begin position="71"/>
        <end position="73"/>
    </location>
</feature>
<feature type="strand" evidence="7">
    <location>
        <begin position="77"/>
        <end position="81"/>
    </location>
</feature>
<feature type="helix" evidence="7">
    <location>
        <begin position="84"/>
        <end position="86"/>
    </location>
</feature>
<feature type="helix" evidence="7">
    <location>
        <begin position="87"/>
        <end position="92"/>
    </location>
</feature>
<feature type="helix" evidence="7">
    <location>
        <begin position="94"/>
        <end position="104"/>
    </location>
</feature>
<feature type="turn" evidence="7">
    <location>
        <begin position="105"/>
        <end position="111"/>
    </location>
</feature>
<feature type="strand" evidence="7">
    <location>
        <begin position="112"/>
        <end position="122"/>
    </location>
</feature>
<feature type="helix" evidence="7">
    <location>
        <begin position="125"/>
        <end position="130"/>
    </location>
</feature>
<feature type="helix" evidence="7">
    <location>
        <begin position="131"/>
        <end position="145"/>
    </location>
</feature>
<feature type="strand" evidence="7">
    <location>
        <begin position="150"/>
        <end position="157"/>
    </location>
</feature>
<feature type="helix" evidence="7">
    <location>
        <begin position="158"/>
        <end position="160"/>
    </location>
</feature>
<feature type="helix" evidence="7">
    <location>
        <begin position="167"/>
        <end position="169"/>
    </location>
</feature>
<feature type="strand" evidence="7">
    <location>
        <begin position="171"/>
        <end position="174"/>
    </location>
</feature>
<feature type="helix" evidence="7">
    <location>
        <begin position="176"/>
        <end position="187"/>
    </location>
</feature>
<feature type="strand" evidence="7">
    <location>
        <begin position="191"/>
        <end position="194"/>
    </location>
</feature>
<feature type="helix" evidence="7">
    <location>
        <begin position="197"/>
        <end position="203"/>
    </location>
</feature>
<feature type="turn" evidence="7">
    <location>
        <begin position="205"/>
        <end position="207"/>
    </location>
</feature>
<feature type="helix" evidence="7">
    <location>
        <begin position="210"/>
        <end position="214"/>
    </location>
</feature>
<feature type="turn" evidence="7">
    <location>
        <begin position="224"/>
        <end position="226"/>
    </location>
</feature>
<feature type="helix" evidence="7">
    <location>
        <begin position="233"/>
        <end position="248"/>
    </location>
</feature>
<feature type="strand" evidence="7">
    <location>
        <begin position="255"/>
        <end position="260"/>
    </location>
</feature>
<feature type="strand" evidence="7">
    <location>
        <begin position="264"/>
        <end position="267"/>
    </location>
</feature>
<feature type="helix" evidence="7">
    <location>
        <begin position="272"/>
        <end position="283"/>
    </location>
</feature>
<feature type="helix" evidence="7">
    <location>
        <begin position="286"/>
        <end position="288"/>
    </location>
</feature>
<feature type="strand" evidence="7">
    <location>
        <begin position="299"/>
        <end position="302"/>
    </location>
</feature>
<feature type="helix" evidence="7">
    <location>
        <begin position="314"/>
        <end position="318"/>
    </location>
</feature>
<feature type="strand" evidence="7">
    <location>
        <begin position="328"/>
        <end position="330"/>
    </location>
</feature>
<dbReference type="EC" id="3.2.1.39" evidence="4"/>
<dbReference type="EMBL" id="M62907">
    <property type="protein sequence ID" value="AAA32939.1"/>
    <property type="molecule type" value="mRNA"/>
</dbReference>
<dbReference type="EMBL" id="X16274">
    <property type="protein sequence ID" value="CAA34350.1"/>
    <property type="molecule type" value="mRNA"/>
</dbReference>
<dbReference type="EMBL" id="M23548">
    <property type="protein sequence ID" value="AAA32958.1"/>
    <property type="molecule type" value="mRNA"/>
</dbReference>
<dbReference type="PIR" id="S05510">
    <property type="entry name" value="S05510"/>
</dbReference>
<dbReference type="PDB" id="1GHS">
    <property type="method" value="X-ray"/>
    <property type="resolution" value="2.30 A"/>
    <property type="chains" value="A/B=29-334"/>
</dbReference>
<dbReference type="PDBsum" id="1GHS"/>
<dbReference type="SMR" id="P15737"/>
<dbReference type="CAZy" id="GH17">
    <property type="family name" value="Glycoside Hydrolase Family 17"/>
</dbReference>
<dbReference type="SABIO-RK" id="P15737"/>
<dbReference type="EvolutionaryTrace" id="P15737"/>
<dbReference type="ExpressionAtlas" id="P15737">
    <property type="expression patterns" value="baseline and differential"/>
</dbReference>
<dbReference type="GO" id="GO:0042973">
    <property type="term" value="F:glucan endo-1,3-beta-D-glucosidase activity"/>
    <property type="evidence" value="ECO:0000314"/>
    <property type="project" value="UniProtKB"/>
</dbReference>
<dbReference type="GO" id="GO:0006076">
    <property type="term" value="P:(1-&gt;3)-beta-D-glucan catabolic process"/>
    <property type="evidence" value="ECO:0000314"/>
    <property type="project" value="UniProtKB"/>
</dbReference>
<dbReference type="GO" id="GO:0050832">
    <property type="term" value="P:defense response to fungus"/>
    <property type="evidence" value="ECO:0000314"/>
    <property type="project" value="UniProtKB"/>
</dbReference>
<dbReference type="FunFam" id="3.20.20.80:FF:000010">
    <property type="entry name" value="glucan endo-1,3-beta-glucosidase, basic"/>
    <property type="match status" value="1"/>
</dbReference>
<dbReference type="Gene3D" id="3.20.20.80">
    <property type="entry name" value="Glycosidases"/>
    <property type="match status" value="1"/>
</dbReference>
<dbReference type="InterPro" id="IPR000490">
    <property type="entry name" value="Glyco_hydro_17"/>
</dbReference>
<dbReference type="InterPro" id="IPR044965">
    <property type="entry name" value="Glyco_hydro_17_plant"/>
</dbReference>
<dbReference type="InterPro" id="IPR017853">
    <property type="entry name" value="Glycoside_hydrolase_SF"/>
</dbReference>
<dbReference type="PANTHER" id="PTHR32227">
    <property type="entry name" value="GLUCAN ENDO-1,3-BETA-GLUCOSIDASE BG1-RELATED-RELATED"/>
    <property type="match status" value="1"/>
</dbReference>
<dbReference type="Pfam" id="PF00332">
    <property type="entry name" value="Glyco_hydro_17"/>
    <property type="match status" value="1"/>
</dbReference>
<dbReference type="SUPFAM" id="SSF51445">
    <property type="entry name" value="(Trans)glycosidases"/>
    <property type="match status" value="1"/>
</dbReference>
<dbReference type="PROSITE" id="PS00587">
    <property type="entry name" value="GLYCOSYL_HYDROL_F17"/>
    <property type="match status" value="1"/>
</dbReference>
<accession>P15737</accession>
<proteinExistence type="evidence at protein level"/>
<sequence length="334" mass="35194">MARKDVASMFAAALFIGAFAAVPTSVQSIGVCYGVIGNNLPSRSDVVQLYRSKGINGMRIYFADGQALSALRNSGIGLILDIGNDQLANIAASTSNAASWVQNNVRPYYPAVNIKYIAAGNEVQGGATQSILPAMRNLNAALSAAGLGAIKVSTSIRFDEVANSFPPSAGVFKNAYMTDVARLLASTGAPLLANVYPYFAYRDNPGSISLNYATFQPGTTVRDQNNGLTYTSLFDAMVDAVYAALEKAGAPAVKVVVSESGWPSAGGFAASAGNARTYNQGLINHVGGGTPKKREALETYIFAMFNENQKTGDATERSFGLFNPDKSPAYNIQF</sequence>
<reference key="1">
    <citation type="journal article" date="1989" name="Plant Mol. Biol.">
        <title>Purification of (1--&gt;3)-beta-glucan endohydrolase isoenzyme II from germinated barley and determination of its primary structure from a cDNA clone.</title>
        <authorList>
            <person name="Hoej P.B."/>
            <person name="Hartman D.J."/>
            <person name="Morrice N.A."/>
            <person name="Doan D.N.P."/>
            <person name="Fincher G.B."/>
        </authorList>
    </citation>
    <scope>NUCLEOTIDE SEQUENCE [MRNA]</scope>
    <scope>PROTEIN SEQUENCE OF 29-68</scope>
    <source>
        <strain>cv. Clipper</strain>
    </source>
</reference>
<reference key="2">
    <citation type="journal article" date="1991" name="J. Biol. Chem.">
        <title>Biochemical and molecular characterization of three barley seed proteins with antifungal properties.</title>
        <authorList>
            <person name="Leah R."/>
            <person name="Tommerup H."/>
            <person name="Svendsen I."/>
            <person name="Mundy J."/>
        </authorList>
    </citation>
    <scope>NUCLEOTIDE SEQUENCE [MRNA]</scope>
    <scope>FUNCTION</scope>
    <source>
        <strain>cv. Piggy</strain>
    </source>
</reference>
<reference key="3">
    <citation type="submission" date="1989-08" db="EMBL/GenBank/DDBJ databases">
        <authorList>
            <person name="Jutidamrongphan W."/>
            <person name="Mackinnon G."/>
            <person name="Manners J."/>
            <person name="Simpson R.S."/>
            <person name="Scott K.J."/>
        </authorList>
    </citation>
    <scope>NUCLEOTIDE SEQUENCE [MRNA] OF 258-332</scope>
    <source>
        <tissue>Leaf</tissue>
    </source>
</reference>
<reference key="4">
    <citation type="journal article" date="1988" name="Carlsberg Res. Commun.">
        <title>Purification and amino acid sequence determination of an endo-1,3-beta-glucanase from barley.</title>
        <authorList>
            <person name="Ballance G.M."/>
            <person name="Svendsen I."/>
        </authorList>
    </citation>
    <scope>PROTEIN SEQUENCE OF 29-334</scope>
</reference>
<reference key="5">
    <citation type="journal article" date="1993" name="J. Biol. Chem.">
        <title>Evolution of polysaccharide hydrolase substrate specificity. Catalytic amino acids are conserved in barley 1,3-1,4- and 1,3-beta-glucanases.</title>
        <authorList>
            <person name="Chen L."/>
            <person name="Fincher G.B."/>
            <person name="Hoej P.B."/>
        </authorList>
    </citation>
    <scope>PROTEIN SEQUENCE OF 255-266 AND 311-317</scope>
    <scope>CATALYTIC ACTIVITY</scope>
    <scope>ACTIVE SITE</scope>
    <scope>BIOPHYSICOCHEMICAL PROPERTIES</scope>
</reference>
<reference key="6">
    <citation type="journal article" date="1994" name="Proc. Natl. Acad. Sci. U.S.A.">
        <title>Three-dimensional structures of two plant beta-glucan endohydrolases with distinct substrate specificities.</title>
        <authorList>
            <person name="Varghese J.N."/>
            <person name="Garrett T.P.J."/>
            <person name="Colman P.M."/>
            <person name="Chen L."/>
            <person name="Hoej P.B."/>
            <person name="Fincher G.B."/>
        </authorList>
    </citation>
    <scope>X-RAY CRYSTALLOGRAPHY (2.3 ANGSTROMS) OF 29-334</scope>
</reference>
<comment type="function">
    <text evidence="2 4">May provide a degree of protection against microbial invasion of germinated barley grain through its ability to degrade fungal cell wall polysaccharides (PubMed:1899089). Hydrolyzes laminarin in vitro (PubMed:8514770).</text>
</comment>
<comment type="catalytic activity">
    <reaction evidence="4">
        <text>Hydrolysis of (1-&gt;3)-beta-D-glucosidic linkages in (1-&gt;3)-beta-D-glucans.</text>
        <dbReference type="EC" id="3.2.1.39"/>
    </reaction>
</comment>
<comment type="biophysicochemical properties">
    <phDependence>
        <text evidence="4">Optimum pH is 4.5 (at 37 degrees Celsius).</text>
    </phDependence>
</comment>
<comment type="similarity">
    <text evidence="6">Belongs to the glycosyl hydrolase 17 family.</text>
</comment>
<name>E13B_HORVU</name>
<protein>
    <recommendedName>
        <fullName>Glucan endo-1,3-beta-glucosidase GII</fullName>
        <ecNumber evidence="4">3.2.1.39</ecNumber>
    </recommendedName>
    <alternativeName>
        <fullName>(1-&gt;3)-beta-glucan endohydrolase GII</fullName>
    </alternativeName>
    <alternativeName>
        <fullName>(1-&gt;3)-beta-glucanase isoenzyme GII</fullName>
    </alternativeName>
    <alternativeName>
        <fullName>Beta-1,3-endoglucanase GII</fullName>
    </alternativeName>
</protein>
<organism>
    <name type="scientific">Hordeum vulgare</name>
    <name type="common">Barley</name>
    <dbReference type="NCBI Taxonomy" id="4513"/>
    <lineage>
        <taxon>Eukaryota</taxon>
        <taxon>Viridiplantae</taxon>
        <taxon>Streptophyta</taxon>
        <taxon>Embryophyta</taxon>
        <taxon>Tracheophyta</taxon>
        <taxon>Spermatophyta</taxon>
        <taxon>Magnoliopsida</taxon>
        <taxon>Liliopsida</taxon>
        <taxon>Poales</taxon>
        <taxon>Poaceae</taxon>
        <taxon>BOP clade</taxon>
        <taxon>Pooideae</taxon>
        <taxon>Triticodae</taxon>
        <taxon>Triticeae</taxon>
        <taxon>Hordeinae</taxon>
        <taxon>Hordeum</taxon>
    </lineage>
</organism>